<feature type="chain" id="PRO_0000068985" description="5-hydroxytryptamine receptor">
    <location>
        <begin position="1"/>
        <end position="446"/>
    </location>
</feature>
<feature type="topological domain" description="Extracellular" evidence="1">
    <location>
        <begin position="1"/>
        <end position="65"/>
    </location>
</feature>
<feature type="transmembrane region" description="Helical; Name=1" evidence="1">
    <location>
        <begin position="66"/>
        <end position="88"/>
    </location>
</feature>
<feature type="topological domain" description="Cytoplasmic" evidence="1">
    <location>
        <begin position="89"/>
        <end position="98"/>
    </location>
</feature>
<feature type="transmembrane region" description="Helical; Name=2" evidence="1">
    <location>
        <begin position="99"/>
        <end position="120"/>
    </location>
</feature>
<feature type="topological domain" description="Extracellular" evidence="1">
    <location>
        <begin position="121"/>
        <end position="135"/>
    </location>
</feature>
<feature type="transmembrane region" description="Helical; Name=3" evidence="1">
    <location>
        <begin position="136"/>
        <end position="157"/>
    </location>
</feature>
<feature type="topological domain" description="Cytoplasmic" evidence="1">
    <location>
        <begin position="158"/>
        <end position="176"/>
    </location>
</feature>
<feature type="transmembrane region" description="Helical; Name=4" evidence="1">
    <location>
        <begin position="177"/>
        <end position="199"/>
    </location>
</feature>
<feature type="topological domain" description="Extracellular" evidence="1">
    <location>
        <begin position="200"/>
        <end position="227"/>
    </location>
</feature>
<feature type="transmembrane region" description="Helical; Name=5" evidence="1">
    <location>
        <begin position="228"/>
        <end position="249"/>
    </location>
</feature>
<feature type="topological domain" description="Cytoplasmic" evidence="1">
    <location>
        <begin position="250"/>
        <end position="367"/>
    </location>
</feature>
<feature type="transmembrane region" description="Helical; Name=6" evidence="1">
    <location>
        <begin position="368"/>
        <end position="391"/>
    </location>
</feature>
<feature type="topological domain" description="Extracellular" evidence="1">
    <location>
        <begin position="392"/>
        <end position="399"/>
    </location>
</feature>
<feature type="transmembrane region" description="Helical; Name=7" evidence="1">
    <location>
        <begin position="400"/>
        <end position="422"/>
    </location>
</feature>
<feature type="topological domain" description="Cytoplasmic" evidence="1">
    <location>
        <begin position="423"/>
        <end position="446"/>
    </location>
</feature>
<feature type="region of interest" description="Disordered" evidence="4">
    <location>
        <begin position="304"/>
        <end position="329"/>
    </location>
</feature>
<feature type="compositionally biased region" description="Polar residues" evidence="4">
    <location>
        <begin position="304"/>
        <end position="324"/>
    </location>
</feature>
<feature type="glycosylation site" description="N-linked (GlcNAc...) asparagine" evidence="2">
    <location>
        <position position="23"/>
    </location>
</feature>
<feature type="glycosylation site" description="N-linked (GlcNAc...) asparagine" evidence="2">
    <location>
        <position position="27"/>
    </location>
</feature>
<feature type="glycosylation site" description="N-linked (GlcNAc...) asparagine" evidence="2">
    <location>
        <position position="36"/>
    </location>
</feature>
<feature type="glycosylation site" description="N-linked (GlcNAc...) asparagine" evidence="2">
    <location>
        <position position="42"/>
    </location>
</feature>
<feature type="disulfide bond" evidence="3">
    <location>
        <begin position="134"/>
        <end position="214"/>
    </location>
</feature>
<comment type="function">
    <text evidence="1">This is a receptor for 5-hydroxytryptamine (serotonin), a biogenic hormone that function as a neurotransmitter, a hormone, and a mitogen.</text>
</comment>
<comment type="subcellular location">
    <subcellularLocation>
        <location>Cell membrane</location>
        <topology>Multi-pass membrane protein</topology>
    </subcellularLocation>
</comment>
<comment type="similarity">
    <text evidence="3">Belongs to the G-protein coupled receptor 1 family.</text>
</comment>
<sequence length="446" mass="48599">MEGAEGQEELDWEALYLRLPLQNCSWNSTGWEPNWNVTVVPNTTWWQASAPFDTPAALVRAAAKAVVLGLLILATVVGNVFVIAAILLERHLRSAANNLILSLAVADLLVACLVMPLGAVYEVVQRWTLGPELCDMWTSGDVLCCTASILHLVAIALDRYWAVTNIDYIHASTAKRVGMMIACVWTVSFFVCIAQLLGWKDPDWNQRVSEDLRCVVSQDVGYQIFATASSFYVPVLIILILYWRIYQTARKRIRRRRGATARGGVGPPPVPAGGALVAGGGSGGIAAAVVAVIGRPLPTISETTTTGFTNVSSNNTSPEKQSCANGLEADPPTTGYGAVAAAYYPSLVRRKPKEAADSKRERKAAKTLAIITGAFVACWLPFFVLAILVPTCDCEVSPVLTSLSLWLGYFNSTLNPVIYTVFSPEFRHAFQRLLCGRRVRRRRAPQ</sequence>
<keyword id="KW-1003">Cell membrane</keyword>
<keyword id="KW-1015">Disulfide bond</keyword>
<keyword id="KW-0297">G-protein coupled receptor</keyword>
<keyword id="KW-0325">Glycoprotein</keyword>
<keyword id="KW-0472">Membrane</keyword>
<keyword id="KW-0675">Receptor</keyword>
<keyword id="KW-1185">Reference proteome</keyword>
<keyword id="KW-0807">Transducer</keyword>
<keyword id="KW-0812">Transmembrane</keyword>
<keyword id="KW-1133">Transmembrane helix</keyword>
<accession>Q17239</accession>
<dbReference type="EMBL" id="X95604">
    <property type="protein sequence ID" value="CAA64862.1"/>
    <property type="molecule type" value="mRNA"/>
</dbReference>
<dbReference type="RefSeq" id="NP_001037502.1">
    <property type="nucleotide sequence ID" value="NM_001044037.1"/>
</dbReference>
<dbReference type="SMR" id="Q17239"/>
<dbReference type="STRING" id="7091.Q17239"/>
<dbReference type="PaxDb" id="7091-BGIBMGA006929-TA"/>
<dbReference type="EnsemblMetazoa" id="NM_001044037.1">
    <property type="protein sequence ID" value="NP_001037502.1"/>
    <property type="gene ID" value="GeneID_693054"/>
</dbReference>
<dbReference type="GeneID" id="693054"/>
<dbReference type="KEGG" id="bmor:693054"/>
<dbReference type="CTD" id="175322"/>
<dbReference type="eggNOG" id="KOG3656">
    <property type="taxonomic scope" value="Eukaryota"/>
</dbReference>
<dbReference type="HOGENOM" id="CLU_009579_11_1_1"/>
<dbReference type="InParanoid" id="Q17239"/>
<dbReference type="OrthoDB" id="515915at7088"/>
<dbReference type="Proteomes" id="UP000005204">
    <property type="component" value="Unassembled WGS sequence"/>
</dbReference>
<dbReference type="GO" id="GO:0005886">
    <property type="term" value="C:plasma membrane"/>
    <property type="evidence" value="ECO:0007669"/>
    <property type="project" value="UniProtKB-SubCell"/>
</dbReference>
<dbReference type="GO" id="GO:0004930">
    <property type="term" value="F:G protein-coupled receptor activity"/>
    <property type="evidence" value="ECO:0007669"/>
    <property type="project" value="UniProtKB-KW"/>
</dbReference>
<dbReference type="GO" id="GO:0071880">
    <property type="term" value="P:adenylate cyclase-activating adrenergic receptor signaling pathway"/>
    <property type="evidence" value="ECO:0007669"/>
    <property type="project" value="TreeGrafter"/>
</dbReference>
<dbReference type="GO" id="GO:0043410">
    <property type="term" value="P:positive regulation of MAPK cascade"/>
    <property type="evidence" value="ECO:0007669"/>
    <property type="project" value="TreeGrafter"/>
</dbReference>
<dbReference type="CDD" id="cd15331">
    <property type="entry name" value="7tmA_5-HT1A_invertebrates"/>
    <property type="match status" value="1"/>
</dbReference>
<dbReference type="Gene3D" id="1.20.1070.10">
    <property type="entry name" value="Rhodopsin 7-helix transmembrane proteins"/>
    <property type="match status" value="1"/>
</dbReference>
<dbReference type="InterPro" id="IPR000276">
    <property type="entry name" value="GPCR_Rhodpsn"/>
</dbReference>
<dbReference type="InterPro" id="IPR017452">
    <property type="entry name" value="GPCR_Rhodpsn_7TM"/>
</dbReference>
<dbReference type="PANTHER" id="PTHR24248:SF200">
    <property type="entry name" value="5-HYDROXYTRYPTAMINE RECEPTOR 1B-LIKE ISOFORM X1"/>
    <property type="match status" value="1"/>
</dbReference>
<dbReference type="PANTHER" id="PTHR24248">
    <property type="entry name" value="ADRENERGIC RECEPTOR-RELATED G-PROTEIN COUPLED RECEPTOR"/>
    <property type="match status" value="1"/>
</dbReference>
<dbReference type="Pfam" id="PF00001">
    <property type="entry name" value="7tm_1"/>
    <property type="match status" value="1"/>
</dbReference>
<dbReference type="PRINTS" id="PR00237">
    <property type="entry name" value="GPCRRHODOPSN"/>
</dbReference>
<dbReference type="SMART" id="SM01381">
    <property type="entry name" value="7TM_GPCR_Srsx"/>
    <property type="match status" value="1"/>
</dbReference>
<dbReference type="SUPFAM" id="SSF81321">
    <property type="entry name" value="Family A G protein-coupled receptor-like"/>
    <property type="match status" value="1"/>
</dbReference>
<dbReference type="PROSITE" id="PS00237">
    <property type="entry name" value="G_PROTEIN_RECEP_F1_1"/>
    <property type="match status" value="1"/>
</dbReference>
<dbReference type="PROSITE" id="PS50262">
    <property type="entry name" value="G_PROTEIN_RECEP_F1_2"/>
    <property type="match status" value="1"/>
</dbReference>
<organism>
    <name type="scientific">Bombyx mori</name>
    <name type="common">Silk moth</name>
    <dbReference type="NCBI Taxonomy" id="7091"/>
    <lineage>
        <taxon>Eukaryota</taxon>
        <taxon>Metazoa</taxon>
        <taxon>Ecdysozoa</taxon>
        <taxon>Arthropoda</taxon>
        <taxon>Hexapoda</taxon>
        <taxon>Insecta</taxon>
        <taxon>Pterygota</taxon>
        <taxon>Neoptera</taxon>
        <taxon>Endopterygota</taxon>
        <taxon>Lepidoptera</taxon>
        <taxon>Glossata</taxon>
        <taxon>Ditrysia</taxon>
        <taxon>Bombycoidea</taxon>
        <taxon>Bombycidae</taxon>
        <taxon>Bombycinae</taxon>
        <taxon>Bombyx</taxon>
    </lineage>
</organism>
<name>5HTR_BOMMO</name>
<protein>
    <recommendedName>
        <fullName>5-hydroxytryptamine receptor</fullName>
        <shortName>5-HT receptor</shortName>
    </recommendedName>
    <alternativeName>
        <fullName>Serotonin receptor</fullName>
    </alternativeName>
</protein>
<reference key="1">
    <citation type="journal article" date="1996" name="Insect Biochem. Mol. Biol.">
        <title>Cloning of biogenic amine receptors from moths (Bombyx mori and Heliothis virescens).</title>
        <authorList>
            <person name="von Nickisch-Rosenegk E."/>
            <person name="Krieger J."/>
            <person name="Kubick S."/>
            <person name="Laage R."/>
            <person name="Strobel J."/>
            <person name="Strotmann J."/>
            <person name="Breer H."/>
        </authorList>
    </citation>
    <scope>NUCLEOTIDE SEQUENCE [MRNA]</scope>
    <source>
        <tissue>Antenna</tissue>
    </source>
</reference>
<evidence type="ECO:0000250" key="1"/>
<evidence type="ECO:0000255" key="2"/>
<evidence type="ECO:0000255" key="3">
    <source>
        <dbReference type="PROSITE-ProRule" id="PRU00521"/>
    </source>
</evidence>
<evidence type="ECO:0000256" key="4">
    <source>
        <dbReference type="SAM" id="MobiDB-lite"/>
    </source>
</evidence>
<proteinExistence type="evidence at transcript level"/>